<protein>
    <recommendedName>
        <fullName>Zinc finger protein ZIC 2</fullName>
    </recommendedName>
    <alternativeName>
        <fullName>Zinc finger protein of the cerebellum 2</fullName>
    </alternativeName>
</protein>
<evidence type="ECO:0000250" key="1"/>
<evidence type="ECO:0000250" key="2">
    <source>
        <dbReference type="UniProtKB" id="Q62520"/>
    </source>
</evidence>
<evidence type="ECO:0000255" key="3">
    <source>
        <dbReference type="PROSITE-ProRule" id="PRU00042"/>
    </source>
</evidence>
<evidence type="ECO:0000256" key="4">
    <source>
        <dbReference type="SAM" id="MobiDB-lite"/>
    </source>
</evidence>
<evidence type="ECO:0000269" key="5">
    <source>
    </source>
</evidence>
<evidence type="ECO:0000269" key="6">
    <source>
    </source>
</evidence>
<evidence type="ECO:0000269" key="7">
    <source>
    </source>
</evidence>
<evidence type="ECO:0000269" key="8">
    <source>
    </source>
</evidence>
<evidence type="ECO:0000269" key="9">
    <source>
    </source>
</evidence>
<evidence type="ECO:0000269" key="10">
    <source>
    </source>
</evidence>
<evidence type="ECO:0000305" key="11"/>
<evidence type="ECO:0007744" key="12">
    <source>
    </source>
</evidence>
<keyword id="KW-0010">Activator</keyword>
<keyword id="KW-0963">Cytoplasm</keyword>
<keyword id="KW-0217">Developmental protein</keyword>
<keyword id="KW-0221">Differentiation</keyword>
<keyword id="KW-0225">Disease variant</keyword>
<keyword id="KW-0238">DNA-binding</keyword>
<keyword id="KW-0370">Holoprosencephaly</keyword>
<keyword id="KW-1017">Isopeptide bond</keyword>
<keyword id="KW-0479">Metal-binding</keyword>
<keyword id="KW-0524">Neurogenesis</keyword>
<keyword id="KW-0539">Nucleus</keyword>
<keyword id="KW-0597">Phosphoprotein</keyword>
<keyword id="KW-1267">Proteomics identification</keyword>
<keyword id="KW-1185">Reference proteome</keyword>
<keyword id="KW-0677">Repeat</keyword>
<keyword id="KW-0678">Repressor</keyword>
<keyword id="KW-0804">Transcription</keyword>
<keyword id="KW-0805">Transcription regulation</keyword>
<keyword id="KW-0832">Ubl conjugation</keyword>
<keyword id="KW-0862">Zinc</keyword>
<keyword id="KW-0863">Zinc-finger</keyword>
<comment type="function">
    <text>Acts as a transcriptional activator or repressor. Plays important roles in the early stage of organogenesis of the CNS. Activates the transcription of the serotonin transporter SERT in uncrossed ipsilateral retinal ganglion cells (iRGCs) to refine eye-specific projections in primary visual targets. Its transcriptional activity is repressed by MDFIC. Involved in the formation of the ipsilateral retinal projection at the optic chiasm midline. Drives the expression of EPHB1 on ipsilaterally projecting growth cones. Binds to the minimal GLI-consensus sequence 5'-TGGGTGGTC-3'. Associates to the basal SERT promoter region from ventrotemporal retinal segments of retinal embryos.</text>
</comment>
<comment type="subunit">
    <text evidence="2 8">Interacts with RNF180. Interacts (via the C2H2-type domains 3, 4 and 5) with MDFIC (via the C2H2-type domains 3, 4 and 5); the interaction reduces its transcriptional activity. Interacts with GLI1 and GLI2 (By similarity). Interacts (via C2H2-type domain 3) with DHX9 (PubMed:17251188).</text>
</comment>
<comment type="interaction">
    <interactant intactId="EBI-7737399">
        <id>O95409</id>
    </interactant>
    <interactant intactId="EBI-1055068">
        <id>Q9BUP0</id>
        <label>EFHD1</label>
    </interactant>
    <organismsDiffer>false</organismsDiffer>
    <experiments>2</experiments>
</comment>
<comment type="subcellular location">
    <subcellularLocation>
        <location>Nucleus</location>
    </subcellularLocation>
    <subcellularLocation>
        <location evidence="1">Cytoplasm</location>
    </subcellularLocation>
    <text evidence="1">Localizes in the cytoplasm in presence of MDFIC overexpression. Both phosphorylated and unphosphorylated forms are localized in the nucleus (By similarity).</text>
</comment>
<comment type="domain">
    <text evidence="1">The C2H2-type 3, 4 and 5 zinc finger domains are necessary for transcription activation.</text>
</comment>
<comment type="PTM">
    <text>Phosphorylated.</text>
</comment>
<comment type="PTM">
    <text>Ubiquitinated by RNF180, leading to its degradation.</text>
</comment>
<comment type="polymorphism">
    <text evidence="5">The poly-His region between amino acids 231-239 of ZIC2 is polymorphic and the number of His can vary from 8 to 12.</text>
</comment>
<comment type="disease" evidence="5 6 7 9 10">
    <disease id="DI-00569">
        <name>Holoprosencephaly 5</name>
        <acronym>HPE5</acronym>
        <description>A structural anomaly of the brain, in which the developing forebrain fails to correctly separate into right and left hemispheres. Holoprosencephaly is genetically heterogeneous and associated with several distinct facies and phenotypic variability.</description>
        <dbReference type="MIM" id="609637"/>
    </disease>
    <text>The disease is caused by variants affecting the gene represented in this entry.</text>
</comment>
<comment type="similarity">
    <text evidence="11">Belongs to the GLI C2H2-type zinc-finger protein family.</text>
</comment>
<proteinExistence type="evidence at protein level"/>
<organism>
    <name type="scientific">Homo sapiens</name>
    <name type="common">Human</name>
    <dbReference type="NCBI Taxonomy" id="9606"/>
    <lineage>
        <taxon>Eukaryota</taxon>
        <taxon>Metazoa</taxon>
        <taxon>Chordata</taxon>
        <taxon>Craniata</taxon>
        <taxon>Vertebrata</taxon>
        <taxon>Euteleostomi</taxon>
        <taxon>Mammalia</taxon>
        <taxon>Eutheria</taxon>
        <taxon>Euarchontoglires</taxon>
        <taxon>Primates</taxon>
        <taxon>Haplorrhini</taxon>
        <taxon>Catarrhini</taxon>
        <taxon>Hominidae</taxon>
        <taxon>Homo</taxon>
    </lineage>
</organism>
<accession>O95409</accession>
<accession>Q5VYA9</accession>
<accession>Q9H309</accession>
<dbReference type="EMBL" id="AF104902">
    <property type="protein sequence ID" value="AAC96325.1"/>
    <property type="molecule type" value="mRNA"/>
</dbReference>
<dbReference type="EMBL" id="AF193855">
    <property type="protein sequence ID" value="AAG28409.1"/>
    <property type="molecule type" value="mRNA"/>
</dbReference>
<dbReference type="EMBL" id="AL355338">
    <property type="status" value="NOT_ANNOTATED_CDS"/>
    <property type="molecule type" value="Genomic_DNA"/>
</dbReference>
<dbReference type="CCDS" id="CCDS9495.1"/>
<dbReference type="RefSeq" id="NP_009060.2">
    <property type="nucleotide sequence ID" value="NM_007129.3"/>
</dbReference>
<dbReference type="SMR" id="O95409"/>
<dbReference type="BioGRID" id="113378">
    <property type="interactions" value="45"/>
</dbReference>
<dbReference type="CORUM" id="O95409"/>
<dbReference type="FunCoup" id="O95409">
    <property type="interactions" value="2356"/>
</dbReference>
<dbReference type="IntAct" id="O95409">
    <property type="interactions" value="23"/>
</dbReference>
<dbReference type="MINT" id="O95409"/>
<dbReference type="STRING" id="9606.ENSP00000365514"/>
<dbReference type="iPTMnet" id="O95409"/>
<dbReference type="PhosphoSitePlus" id="O95409"/>
<dbReference type="BioMuta" id="ZIC2"/>
<dbReference type="jPOST" id="O95409"/>
<dbReference type="MassIVE" id="O95409"/>
<dbReference type="PaxDb" id="9606-ENSP00000365514"/>
<dbReference type="PeptideAtlas" id="O95409"/>
<dbReference type="ProteomicsDB" id="50861"/>
<dbReference type="Pumba" id="O95409"/>
<dbReference type="Antibodypedia" id="10980">
    <property type="antibodies" value="190 antibodies from 30 providers"/>
</dbReference>
<dbReference type="DNASU" id="7546"/>
<dbReference type="Ensembl" id="ENST00000376335.8">
    <property type="protein sequence ID" value="ENSP00000365514.3"/>
    <property type="gene ID" value="ENSG00000043355.12"/>
</dbReference>
<dbReference type="GeneID" id="7546"/>
<dbReference type="KEGG" id="hsa:7546"/>
<dbReference type="MANE-Select" id="ENST00000376335.8">
    <property type="protein sequence ID" value="ENSP00000365514.3"/>
    <property type="RefSeq nucleotide sequence ID" value="NM_007129.5"/>
    <property type="RefSeq protein sequence ID" value="NP_009060.2"/>
</dbReference>
<dbReference type="UCSC" id="uc001von.4">
    <property type="organism name" value="human"/>
</dbReference>
<dbReference type="AGR" id="HGNC:12873"/>
<dbReference type="CTD" id="7546"/>
<dbReference type="DisGeNET" id="7546"/>
<dbReference type="GeneCards" id="ZIC2"/>
<dbReference type="GeneReviews" id="ZIC2"/>
<dbReference type="HGNC" id="HGNC:12873">
    <property type="gene designation" value="ZIC2"/>
</dbReference>
<dbReference type="HPA" id="ENSG00000043355">
    <property type="expression patterns" value="Tissue enriched (brain)"/>
</dbReference>
<dbReference type="MalaCards" id="ZIC2"/>
<dbReference type="MIM" id="603073">
    <property type="type" value="gene"/>
</dbReference>
<dbReference type="MIM" id="609637">
    <property type="type" value="phenotype"/>
</dbReference>
<dbReference type="neXtProt" id="NX_O95409"/>
<dbReference type="OpenTargets" id="ENSG00000043355"/>
<dbReference type="Orphanet" id="93925">
    <property type="disease" value="Alobar holoprosencephaly"/>
</dbReference>
<dbReference type="Orphanet" id="93924">
    <property type="disease" value="Lobar holoprosencephaly"/>
</dbReference>
<dbReference type="Orphanet" id="280200">
    <property type="disease" value="Microform holoprosencephaly"/>
</dbReference>
<dbReference type="Orphanet" id="93926">
    <property type="disease" value="Midline interhemispheric variant of holoprosencephaly"/>
</dbReference>
<dbReference type="Orphanet" id="220386">
    <property type="disease" value="Semilobar holoprosencephaly"/>
</dbReference>
<dbReference type="Orphanet" id="280195">
    <property type="disease" value="Septopreoptic holoprosencephaly"/>
</dbReference>
<dbReference type="PharmGKB" id="PA37462"/>
<dbReference type="VEuPathDB" id="HostDB:ENSG00000043355"/>
<dbReference type="eggNOG" id="KOG1721">
    <property type="taxonomic scope" value="Eukaryota"/>
</dbReference>
<dbReference type="GeneTree" id="ENSGT00940000160645"/>
<dbReference type="HOGENOM" id="CLU_002678_37_1_1"/>
<dbReference type="InParanoid" id="O95409"/>
<dbReference type="OMA" id="GQYGPMN"/>
<dbReference type="OrthoDB" id="3214149at2759"/>
<dbReference type="PAN-GO" id="O95409">
    <property type="GO annotations" value="5 GO annotations based on evolutionary models"/>
</dbReference>
<dbReference type="PhylomeDB" id="O95409"/>
<dbReference type="TreeFam" id="TF351425"/>
<dbReference type="PathwayCommons" id="O95409"/>
<dbReference type="Reactome" id="R-HSA-9823739">
    <property type="pathway name" value="Formation of the anterior neural plate"/>
</dbReference>
<dbReference type="SignaLink" id="O95409"/>
<dbReference type="SIGNOR" id="O95409"/>
<dbReference type="BioGRID-ORCS" id="7546">
    <property type="hits" value="30 hits in 1186 CRISPR screens"/>
</dbReference>
<dbReference type="ChiTaRS" id="ZIC2">
    <property type="organism name" value="human"/>
</dbReference>
<dbReference type="GeneWiki" id="ZIC2"/>
<dbReference type="GenomeRNAi" id="7546"/>
<dbReference type="Pharos" id="O95409">
    <property type="development level" value="Tbio"/>
</dbReference>
<dbReference type="PRO" id="PR:O95409"/>
<dbReference type="Proteomes" id="UP000005640">
    <property type="component" value="Chromosome 13"/>
</dbReference>
<dbReference type="RNAct" id="O95409">
    <property type="molecule type" value="protein"/>
</dbReference>
<dbReference type="Bgee" id="ENSG00000043355">
    <property type="expression patterns" value="Expressed in cerebellar cortex and 116 other cell types or tissues"/>
</dbReference>
<dbReference type="ExpressionAtlas" id="O95409">
    <property type="expression patterns" value="baseline and differential"/>
</dbReference>
<dbReference type="GO" id="GO:0005737">
    <property type="term" value="C:cytoplasm"/>
    <property type="evidence" value="ECO:0000250"/>
    <property type="project" value="UniProtKB"/>
</dbReference>
<dbReference type="GO" id="GO:0016604">
    <property type="term" value="C:nuclear body"/>
    <property type="evidence" value="ECO:0000314"/>
    <property type="project" value="HPA"/>
</dbReference>
<dbReference type="GO" id="GO:0005654">
    <property type="term" value="C:nucleoplasm"/>
    <property type="evidence" value="ECO:0000314"/>
    <property type="project" value="HPA"/>
</dbReference>
<dbReference type="GO" id="GO:0005634">
    <property type="term" value="C:nucleus"/>
    <property type="evidence" value="ECO:0000250"/>
    <property type="project" value="UniProtKB"/>
</dbReference>
<dbReference type="GO" id="GO:0031490">
    <property type="term" value="F:chromatin DNA binding"/>
    <property type="evidence" value="ECO:0000250"/>
    <property type="project" value="UniProtKB"/>
</dbReference>
<dbReference type="GO" id="GO:0003677">
    <property type="term" value="F:DNA binding"/>
    <property type="evidence" value="ECO:0000250"/>
    <property type="project" value="UniProtKB"/>
</dbReference>
<dbReference type="GO" id="GO:0003700">
    <property type="term" value="F:DNA-binding transcription factor activity"/>
    <property type="evidence" value="ECO:0000250"/>
    <property type="project" value="UniProtKB"/>
</dbReference>
<dbReference type="GO" id="GO:0000981">
    <property type="term" value="F:DNA-binding transcription factor activity, RNA polymerase II-specific"/>
    <property type="evidence" value="ECO:0000318"/>
    <property type="project" value="GO_Central"/>
</dbReference>
<dbReference type="GO" id="GO:0000978">
    <property type="term" value="F:RNA polymerase II cis-regulatory region sequence-specific DNA binding"/>
    <property type="evidence" value="ECO:0000318"/>
    <property type="project" value="GO_Central"/>
</dbReference>
<dbReference type="GO" id="GO:0008270">
    <property type="term" value="F:zinc ion binding"/>
    <property type="evidence" value="ECO:0007669"/>
    <property type="project" value="UniProtKB-KW"/>
</dbReference>
<dbReference type="GO" id="GO:0007420">
    <property type="term" value="P:brain development"/>
    <property type="evidence" value="ECO:0000304"/>
    <property type="project" value="ProtInc"/>
</dbReference>
<dbReference type="GO" id="GO:0030154">
    <property type="term" value="P:cell differentiation"/>
    <property type="evidence" value="ECO:0007669"/>
    <property type="project" value="UniProtKB-KW"/>
</dbReference>
<dbReference type="GO" id="GO:0007417">
    <property type="term" value="P:central nervous system development"/>
    <property type="evidence" value="ECO:0000318"/>
    <property type="project" value="GO_Central"/>
</dbReference>
<dbReference type="GO" id="GO:0045892">
    <property type="term" value="P:negative regulation of DNA-templated transcription"/>
    <property type="evidence" value="ECO:0000250"/>
    <property type="project" value="UniProtKB"/>
</dbReference>
<dbReference type="GO" id="GO:0051091">
    <property type="term" value="P:positive regulation of DNA-binding transcription factor activity"/>
    <property type="evidence" value="ECO:0000250"/>
    <property type="project" value="UniProtKB"/>
</dbReference>
<dbReference type="GO" id="GO:0045893">
    <property type="term" value="P:positive regulation of DNA-templated transcription"/>
    <property type="evidence" value="ECO:0000250"/>
    <property type="project" value="UniProtKB"/>
</dbReference>
<dbReference type="GO" id="GO:0006357">
    <property type="term" value="P:regulation of transcription by RNA polymerase II"/>
    <property type="evidence" value="ECO:0000318"/>
    <property type="project" value="GO_Central"/>
</dbReference>
<dbReference type="GO" id="GO:0007601">
    <property type="term" value="P:visual perception"/>
    <property type="evidence" value="ECO:0000250"/>
    <property type="project" value="UniProtKB"/>
</dbReference>
<dbReference type="FunFam" id="3.30.160.60:FF:000035">
    <property type="entry name" value="Zinc finger protein ZIC 1"/>
    <property type="match status" value="1"/>
</dbReference>
<dbReference type="FunFam" id="3.30.160.60:FF:000039">
    <property type="entry name" value="Zinc finger protein ZIC 1"/>
    <property type="match status" value="1"/>
</dbReference>
<dbReference type="FunFam" id="3.30.160.60:FF:000041">
    <property type="entry name" value="Zinc finger protein ZIC 1"/>
    <property type="match status" value="1"/>
</dbReference>
<dbReference type="FunFam" id="3.30.160.60:FF:001330">
    <property type="entry name" value="Zinc finger protein ZIC 4"/>
    <property type="match status" value="1"/>
</dbReference>
<dbReference type="Gene3D" id="3.30.160.60">
    <property type="entry name" value="Classic Zinc Finger"/>
    <property type="match status" value="4"/>
</dbReference>
<dbReference type="InterPro" id="IPR043359">
    <property type="entry name" value="GLI-like"/>
</dbReference>
<dbReference type="InterPro" id="IPR056436">
    <property type="entry name" value="Znf-C2H2_ZIC1-5/GLI1-3-like"/>
</dbReference>
<dbReference type="InterPro" id="IPR036236">
    <property type="entry name" value="Znf_C2H2_sf"/>
</dbReference>
<dbReference type="InterPro" id="IPR013087">
    <property type="entry name" value="Znf_C2H2_type"/>
</dbReference>
<dbReference type="InterPro" id="IPR041643">
    <property type="entry name" value="Znf_ZIC"/>
</dbReference>
<dbReference type="PANTHER" id="PTHR45718:SF8">
    <property type="entry name" value="GLIS FAMILY ZINC FINGER 2"/>
    <property type="match status" value="1"/>
</dbReference>
<dbReference type="PANTHER" id="PTHR45718">
    <property type="entry name" value="TRANSCRIPTIONAL ACTIVATOR CUBITUS INTERRUPTUS"/>
    <property type="match status" value="1"/>
</dbReference>
<dbReference type="Pfam" id="PF00096">
    <property type="entry name" value="zf-C2H2"/>
    <property type="match status" value="3"/>
</dbReference>
<dbReference type="Pfam" id="PF23561">
    <property type="entry name" value="zf-C2H2_15"/>
    <property type="match status" value="1"/>
</dbReference>
<dbReference type="Pfam" id="PF18366">
    <property type="entry name" value="zf_ZIC"/>
    <property type="match status" value="1"/>
</dbReference>
<dbReference type="SMART" id="SM00355">
    <property type="entry name" value="ZnF_C2H2"/>
    <property type="match status" value="5"/>
</dbReference>
<dbReference type="SUPFAM" id="SSF57667">
    <property type="entry name" value="beta-beta-alpha zinc fingers"/>
    <property type="match status" value="2"/>
</dbReference>
<dbReference type="PROSITE" id="PS00028">
    <property type="entry name" value="ZINC_FINGER_C2H2_1"/>
    <property type="match status" value="3"/>
</dbReference>
<dbReference type="PROSITE" id="PS50157">
    <property type="entry name" value="ZINC_FINGER_C2H2_2"/>
    <property type="match status" value="4"/>
</dbReference>
<feature type="chain" id="PRO_0000047247" description="Zinc finger protein ZIC 2">
    <location>
        <begin position="1"/>
        <end position="532"/>
    </location>
</feature>
<feature type="zinc finger region" description="C2H2-type 1; atypical" evidence="3">
    <location>
        <begin position="256"/>
        <end position="291"/>
    </location>
</feature>
<feature type="zinc finger region" description="C2H2-type 2; atypical" evidence="3">
    <location>
        <begin position="300"/>
        <end position="327"/>
    </location>
</feature>
<feature type="zinc finger region" description="C2H2-type 3" evidence="3">
    <location>
        <begin position="333"/>
        <end position="357"/>
    </location>
</feature>
<feature type="zinc finger region" description="C2H2-type 4" evidence="3">
    <location>
        <begin position="363"/>
        <end position="387"/>
    </location>
</feature>
<feature type="zinc finger region" description="C2H2-type 5" evidence="3">
    <location>
        <begin position="393"/>
        <end position="415"/>
    </location>
</feature>
<feature type="region of interest" description="Necessary for interaction with MDFIC and transcriptional activation or repression" evidence="1">
    <location>
        <begin position="100"/>
        <end position="255"/>
    </location>
</feature>
<feature type="region of interest" description="Disordered" evidence="4">
    <location>
        <begin position="406"/>
        <end position="452"/>
    </location>
</feature>
<feature type="region of interest" description="Disordered" evidence="4">
    <location>
        <begin position="475"/>
        <end position="532"/>
    </location>
</feature>
<feature type="compositionally biased region" description="Low complexity" evidence="4">
    <location>
        <begin position="417"/>
        <end position="435"/>
    </location>
</feature>
<feature type="compositionally biased region" description="Gly residues" evidence="4">
    <location>
        <begin position="476"/>
        <end position="521"/>
    </location>
</feature>
<feature type="compositionally biased region" description="Polar residues" evidence="4">
    <location>
        <begin position="523"/>
        <end position="532"/>
    </location>
</feature>
<feature type="modified residue" description="Phosphoserine" evidence="2">
    <location>
        <position position="191"/>
    </location>
</feature>
<feature type="modified residue" description="Phosphoserine" evidence="2">
    <location>
        <position position="199"/>
    </location>
</feature>
<feature type="cross-link" description="Glycyl lysine isopeptide (Lys-Gly) (interchain with G-Cter in SUMO2)" evidence="12">
    <location>
        <position position="253"/>
    </location>
</feature>
<feature type="sequence variant" id="VAR_023793" description="In HPE5; 2-fold increase in luciferase activity; dbSNP:rs1185333947." evidence="6 7">
    <original>Q</original>
    <variation>P</variation>
    <location>
        <position position="36"/>
    </location>
</feature>
<feature type="sequence variant" id="VAR_058592" description="In HPE5; dbSNP:rs2152162223." evidence="9">
    <original>D</original>
    <variation>N</variation>
    <location>
        <position position="37"/>
    </location>
</feature>
<feature type="sequence variant" id="VAR_058593" description="In HPE5." evidence="9">
    <original>D</original>
    <variation>N</variation>
    <location>
        <position position="128"/>
    </location>
</feature>
<feature type="sequence variant" id="VAR_023794" description="In HPE5; 50% reduction of luciferase activity; requires 2 nucleotide substitutions." evidence="5 6 7">
    <original>D</original>
    <variation>F</variation>
    <location>
        <position position="152"/>
    </location>
</feature>
<feature type="sequence variant" id="VAR_023795" evidence="6">
    <original>H</original>
    <variation>HH</variation>
    <location>
        <position position="239"/>
    </location>
</feature>
<feature type="sequence variant" id="VAR_023796" evidence="6">
    <location>
        <position position="239"/>
    </location>
</feature>
<feature type="sequence variant" id="VAR_058594" description="In HPE5." evidence="9">
    <original>S</original>
    <variation>N</variation>
    <location>
        <position position="272"/>
    </location>
</feature>
<feature type="sequence variant" id="VAR_058595" description="In HPE5." evidence="9">
    <original>H</original>
    <variation>L</variation>
    <location>
        <position position="286"/>
    </location>
</feature>
<feature type="sequence variant" id="VAR_058596" description="In HPE5; dbSNP:rs1325393230." evidence="9">
    <original>H</original>
    <variation>Q</variation>
    <location>
        <position position="286"/>
    </location>
</feature>
<feature type="sequence variant" id="VAR_058597" description="In HPE5; dbSNP:rs2152162715." evidence="9">
    <original>H</original>
    <variation>Y</variation>
    <location>
        <position position="286"/>
    </location>
</feature>
<feature type="sequence variant" id="VAR_058598" description="In HPE5." evidence="9">
    <original>H</original>
    <variation>Y</variation>
    <location>
        <position position="291"/>
    </location>
</feature>
<feature type="sequence variant" id="VAR_058599" description="In HPE5." evidence="9">
    <original>W</original>
    <variation>R</variation>
    <location>
        <position position="304"/>
    </location>
</feature>
<feature type="sequence variant" id="VAR_058600" description="In HPE5." evidence="9">
    <original>F</original>
    <variation>C</variation>
    <location>
        <position position="314"/>
    </location>
</feature>
<feature type="sequence variant" id="VAR_058601" description="In HPE5." evidence="9">
    <original>R</original>
    <variation>L</variation>
    <location>
        <position position="325"/>
    </location>
</feature>
<feature type="sequence variant" id="VAR_058602" description="In HPE5; dbSNP:rs2152162756." evidence="9">
    <original>R</original>
    <variation>S</variation>
    <location>
        <position position="325"/>
    </location>
</feature>
<feature type="sequence variant" id="VAR_058603" description="In HPE5." evidence="9">
    <original>H</original>
    <variation>Y</variation>
    <location>
        <position position="327"/>
    </location>
</feature>
<feature type="sequence variant" id="VAR_058604" description="In HPE5." evidence="9">
    <original>C</original>
    <variation>F</variation>
    <location>
        <position position="335"/>
    </location>
</feature>
<feature type="sequence variant" id="VAR_058605" description="In HPE5." evidence="9">
    <original>R</original>
    <variation>P</variation>
    <location>
        <position position="373"/>
    </location>
</feature>
<feature type="sequence variant" id="VAR_058606" description="In HPE5." evidence="9">
    <original>Y</original>
    <variation>N</variation>
    <location>
        <position position="402"/>
    </location>
</feature>
<feature type="sequence variant" id="VAR_058607" description="In HPE5." evidence="9">
    <original>T</original>
    <variation>K</variation>
    <location>
        <position position="403"/>
    </location>
</feature>
<feature type="sequence variant" id="VAR_058608" description="In HPE5." evidence="9">
    <original>H</original>
    <variation>R</variation>
    <location>
        <position position="404"/>
    </location>
</feature>
<feature type="sequence variant" id="VAR_058609" description="In HPE5; dbSNP:rs1594291868." evidence="9">
    <original>R</original>
    <variation>W</variation>
    <location>
        <position position="409"/>
    </location>
</feature>
<feature type="sequence variant" id="VAR_058610" description="In HPE5; dbSNP:rs794729641." evidence="9">
    <original>H</original>
    <variation>Q</variation>
    <location>
        <position position="415"/>
    </location>
</feature>
<feature type="sequence variant" id="VAR_008856" description="In HPE5; near-complete loss of luciferase activity.">
    <original>A</original>
    <variation>AAAAAAAAAAA</variation>
    <location>
        <position position="470"/>
    </location>
</feature>
<feature type="sequence conflict" description="In Ref. 1; AAC96325." evidence="11" ref="1">
    <original>RGFGD</original>
    <variation>ARLPGT</variation>
    <location>
        <begin position="124"/>
        <end position="128"/>
    </location>
</feature>
<gene>
    <name type="primary">ZIC2</name>
</gene>
<sequence>MLLDAGPQFPAIGVGSFARHHHHSAAAAAAAAAEMQDRELSLAAAQNGFVDSAAAHMGAFKLNPGAHELSPGQSSAFTSQGPGAYPGSAAAAAAAAALGPHAAHVGSYSGPPFNSTRDFLFRSRGFGDSAPGGGQHGLFGPGAGGLHHAHSDAQGHLLFPGLPEQHGPHGSQNVLNGQMRLGLPGEVFGRSEQYRQVASPRTDPYSAAQLHNQYGPMNMNMGMNMAAAAAHHHHHHHHHPGAFFRYMRQQCIKQELICKWIDPEQLSNPKKSCNKTFSTMHELVTHVSVEHVGGPEQSNHVCFWEECPREGKPFKAKYKLVNHIRVHTGEKPFPCPFPGCGKVFARSENLKIHKRTHTGEKPFQCEFEGCDRRFANSSDRKKHMHVHTSDKPYLCKMCDKSYTHPSSLRKHMKVHESSPQGSESSPAASSGYESSTPPGLVSPSAEPQSSSNLSPAAAAAAAAAAAAAAAVSAVHRGGGSGSGGAGGGSGGGSGSGGGGGGAGGGGGGSSGGGSGTAGGHSGLSSNFNEWYV</sequence>
<name>ZIC2_HUMAN</name>
<reference key="1">
    <citation type="journal article" date="1998" name="Nat. Genet.">
        <title>Holoprosencephaly due to mutations in ZIC2, a homologue of Drosophila odd-paired.</title>
        <authorList>
            <person name="Brown S.A."/>
            <person name="Warburton D."/>
            <person name="Brown L.Y."/>
            <person name="Yu C.Y."/>
            <person name="Roeder E.R."/>
            <person name="Stengel-Rutkowski S."/>
            <person name="Hennekam R.C.M."/>
            <person name="Muenke M."/>
        </authorList>
    </citation>
    <scope>NUCLEOTIDE SEQUENCE [MRNA]</scope>
    <scope>CHARACTERIZATION OF VARIANT HPE5 POLY-ALA INS</scope>
</reference>
<reference key="2">
    <citation type="journal article" date="2000" name="J. Biol. Chem.">
        <title>ZIC2 and Sp3 repress Sp1-induced activation of the human D1A dopamine receptor gene.</title>
        <authorList>
            <person name="Yang Y."/>
            <person name="Hwang C.K."/>
            <person name="Junn E."/>
            <person name="Lee G."/>
            <person name="Mouradian M.M."/>
        </authorList>
    </citation>
    <scope>NUCLEOTIDE SEQUENCE [MRNA]</scope>
    <source>
        <tissue>Brain</tissue>
    </source>
</reference>
<reference key="3">
    <citation type="journal article" date="2004" name="Nature">
        <title>The DNA sequence and analysis of human chromosome 13.</title>
        <authorList>
            <person name="Dunham A."/>
            <person name="Matthews L.H."/>
            <person name="Burton J."/>
            <person name="Ashurst J.L."/>
            <person name="Howe K.L."/>
            <person name="Ashcroft K.J."/>
            <person name="Beare D.M."/>
            <person name="Burford D.C."/>
            <person name="Hunt S.E."/>
            <person name="Griffiths-Jones S."/>
            <person name="Jones M.C."/>
            <person name="Keenan S.J."/>
            <person name="Oliver K."/>
            <person name="Scott C.E."/>
            <person name="Ainscough R."/>
            <person name="Almeida J.P."/>
            <person name="Ambrose K.D."/>
            <person name="Andrews D.T."/>
            <person name="Ashwell R.I.S."/>
            <person name="Babbage A.K."/>
            <person name="Bagguley C.L."/>
            <person name="Bailey J."/>
            <person name="Bannerjee R."/>
            <person name="Barlow K.F."/>
            <person name="Bates K."/>
            <person name="Beasley H."/>
            <person name="Bird C.P."/>
            <person name="Bray-Allen S."/>
            <person name="Brown A.J."/>
            <person name="Brown J.Y."/>
            <person name="Burrill W."/>
            <person name="Carder C."/>
            <person name="Carter N.P."/>
            <person name="Chapman J.C."/>
            <person name="Clamp M.E."/>
            <person name="Clark S.Y."/>
            <person name="Clarke G."/>
            <person name="Clee C.M."/>
            <person name="Clegg S.C."/>
            <person name="Cobley V."/>
            <person name="Collins J.E."/>
            <person name="Corby N."/>
            <person name="Coville G.J."/>
            <person name="Deloukas P."/>
            <person name="Dhami P."/>
            <person name="Dunham I."/>
            <person name="Dunn M."/>
            <person name="Earthrowl M.E."/>
            <person name="Ellington A.G."/>
            <person name="Faulkner L."/>
            <person name="Frankish A.G."/>
            <person name="Frankland J."/>
            <person name="French L."/>
            <person name="Garner P."/>
            <person name="Garnett J."/>
            <person name="Gilbert J.G.R."/>
            <person name="Gilson C.J."/>
            <person name="Ghori J."/>
            <person name="Grafham D.V."/>
            <person name="Gribble S.M."/>
            <person name="Griffiths C."/>
            <person name="Hall R.E."/>
            <person name="Hammond S."/>
            <person name="Harley J.L."/>
            <person name="Hart E.A."/>
            <person name="Heath P.D."/>
            <person name="Howden P.J."/>
            <person name="Huckle E.J."/>
            <person name="Hunt P.J."/>
            <person name="Hunt A.R."/>
            <person name="Johnson C."/>
            <person name="Johnson D."/>
            <person name="Kay M."/>
            <person name="Kimberley A.M."/>
            <person name="King A."/>
            <person name="Laird G.K."/>
            <person name="Langford C.J."/>
            <person name="Lawlor S."/>
            <person name="Leongamornlert D.A."/>
            <person name="Lloyd D.M."/>
            <person name="Lloyd C."/>
            <person name="Loveland J.E."/>
            <person name="Lovell J."/>
            <person name="Martin S."/>
            <person name="Mashreghi-Mohammadi M."/>
            <person name="McLaren S.J."/>
            <person name="McMurray A."/>
            <person name="Milne S."/>
            <person name="Moore M.J.F."/>
            <person name="Nickerson T."/>
            <person name="Palmer S.A."/>
            <person name="Pearce A.V."/>
            <person name="Peck A.I."/>
            <person name="Pelan S."/>
            <person name="Phillimore B."/>
            <person name="Porter K.M."/>
            <person name="Rice C.M."/>
            <person name="Searle S."/>
            <person name="Sehra H.K."/>
            <person name="Shownkeen R."/>
            <person name="Skuce C.D."/>
            <person name="Smith M."/>
            <person name="Steward C.A."/>
            <person name="Sycamore N."/>
            <person name="Tester J."/>
            <person name="Thomas D.W."/>
            <person name="Tracey A."/>
            <person name="Tromans A."/>
            <person name="Tubby B."/>
            <person name="Wall M."/>
            <person name="Wallis J.M."/>
            <person name="West A.P."/>
            <person name="Whitehead S.L."/>
            <person name="Willey D.L."/>
            <person name="Wilming L."/>
            <person name="Wray P.W."/>
            <person name="Wright M.W."/>
            <person name="Young L."/>
            <person name="Coulson A."/>
            <person name="Durbin R.M."/>
            <person name="Hubbard T."/>
            <person name="Sulston J.E."/>
            <person name="Beck S."/>
            <person name="Bentley D.R."/>
            <person name="Rogers J."/>
            <person name="Ross M.T."/>
        </authorList>
    </citation>
    <scope>NUCLEOTIDE SEQUENCE [LARGE SCALE GENOMIC DNA]</scope>
</reference>
<reference key="4">
    <citation type="journal article" date="2007" name="J. Biol. Chem.">
        <title>ZIC2-dependent transcriptional regulation is mediated by DNA-dependent protein kinase, poly(ADP-ribose) polymerase, and RNA helicase A.</title>
        <authorList>
            <person name="Ishiguro A."/>
            <person name="Ideta M."/>
            <person name="Mikoshiba K."/>
            <person name="Chen D.J."/>
            <person name="Aruga J."/>
        </authorList>
    </citation>
    <scope>INTERACTION WITH DHX9</scope>
</reference>
<reference key="5">
    <citation type="journal article" date="2011" name="Sci. Signal.">
        <title>System-wide temporal characterization of the proteome and phosphoproteome of human embryonic stem cell differentiation.</title>
        <authorList>
            <person name="Rigbolt K.T."/>
            <person name="Prokhorova T.A."/>
            <person name="Akimov V."/>
            <person name="Henningsen J."/>
            <person name="Johansen P.T."/>
            <person name="Kratchmarova I."/>
            <person name="Kassem M."/>
            <person name="Mann M."/>
            <person name="Olsen J.V."/>
            <person name="Blagoev B."/>
        </authorList>
    </citation>
    <scope>IDENTIFICATION BY MASS SPECTROMETRY [LARGE SCALE ANALYSIS]</scope>
</reference>
<reference key="6">
    <citation type="journal article" date="2017" name="Nat. Struct. Mol. Biol.">
        <title>Site-specific mapping of the human SUMO proteome reveals co-modification with phosphorylation.</title>
        <authorList>
            <person name="Hendriks I.A."/>
            <person name="Lyon D."/>
            <person name="Young C."/>
            <person name="Jensen L.J."/>
            <person name="Vertegaal A.C."/>
            <person name="Nielsen M.L."/>
        </authorList>
    </citation>
    <scope>SUMOYLATION [LARGE SCALE ANALYSIS] AT LYS-253</scope>
    <scope>IDENTIFICATION BY MASS SPECTROMETRY [LARGE SCALE ANALYSIS]</scope>
</reference>
<reference key="7">
    <citation type="journal article" date="2001" name="Hum. Mol. Genet.">
        <title>Holoprosencephaly due to mutations in ZIC2: alanine tract expansion mutations may be caused by parental somatic recombination.</title>
        <authorList>
            <person name="Brown L.Y."/>
            <person name="Odent S."/>
            <person name="David V."/>
            <person name="Blayau M."/>
            <person name="Dubourg C."/>
            <person name="Apacik C."/>
            <person name="Delgado M.A."/>
            <person name="Hall B.D."/>
            <person name="Reynolds J.F."/>
            <person name="Sommer A."/>
            <person name="Wieczorek D."/>
            <person name="Brown S.A."/>
            <person name="Muenke M."/>
        </authorList>
    </citation>
    <scope>VARIANTS HPE5 PHE-152 AND ALA-ALA-ALA-ALA-ALA-ALA-ALA-ALA-ALA-ALA-470 INS</scope>
    <scope>POLYMORPHISM OF POLY-HIS REGION</scope>
</reference>
<reference key="8">
    <citation type="journal article" date="2004" name="Hum. Mutat.">
        <title>Molecular screening of SHH, ZIC2, SIX3, and TGIF genes in patients with features of holoprosencephaly spectrum: mutation review and genotype-phenotype correlations.</title>
        <authorList>
            <person name="Dubourg C."/>
            <person name="Lazaro L."/>
            <person name="Pasquier L."/>
            <person name="Bendavid C."/>
            <person name="Blayau M."/>
            <person name="Le Duff F."/>
            <person name="Durou M.-R."/>
            <person name="Odent S."/>
            <person name="David V."/>
        </authorList>
    </citation>
    <scope>VARIANTS HPE5 PRO-36 AND PHE-152</scope>
    <scope>VARIANTS HIS-239 INS AND HIS-239 DEL</scope>
</reference>
<reference key="9">
    <citation type="journal article" date="2005" name="Hum. Mol. Genet.">
        <title>In vitro analysis of partial loss-of-function ZIC2 mutations in holoprosencephaly: alanine tract expansion modulates DNA binding and transactivation.</title>
        <authorList>
            <person name="Brown L."/>
            <person name="Paraso M."/>
            <person name="Arkell R."/>
            <person name="Brown S."/>
        </authorList>
    </citation>
    <scope>CHARACTERIZATION OF VARIANTS HPE5 PRO-36; PHE-152 AND POLY-ALA INS</scope>
</reference>
<reference key="10">
    <citation type="journal article" date="2009" name="Hum. Mutat.">
        <title>The full spectrum of holoprosencephaly-associated mutations within the ZIC2 gene in humans predicts loss-of-function as the predominant disease mechanism.</title>
        <authorList>
            <person name="Roessler E."/>
            <person name="Lacbawan F."/>
            <person name="Dubourg C."/>
            <person name="Paulussen A."/>
            <person name="Herbergs J."/>
            <person name="Hehr U."/>
            <person name="Bendavid C."/>
            <person name="Zhou N."/>
            <person name="Ouspenskaia M."/>
            <person name="Bale S."/>
            <person name="Odent S."/>
            <person name="David V."/>
            <person name="Muenke M."/>
        </authorList>
    </citation>
    <scope>VARIANTS HPE5 ASN-37; ASN-128; ASN-272; LEU-286; GLN-286; TYR-286; TYR-291; ARG-304; CYS-314; SER-325; LEU-325; TYR-327; PHE-335; PRO-373; ASN-402; LYS-403; ARG-404; TRP-409 AND GLN-415</scope>
</reference>